<reference key="1">
    <citation type="journal article" date="2003" name="Genome Res.">
        <title>Genome sequence of an M3 strain of Streptococcus pyogenes reveals a large-scale genomic rearrangement in invasive strains and new insights into phage evolution.</title>
        <authorList>
            <person name="Nakagawa I."/>
            <person name="Kurokawa K."/>
            <person name="Yamashita A."/>
            <person name="Nakata M."/>
            <person name="Tomiyasu Y."/>
            <person name="Okahashi N."/>
            <person name="Kawabata S."/>
            <person name="Yamazaki K."/>
            <person name="Shiba T."/>
            <person name="Yasunaga T."/>
            <person name="Hayashi H."/>
            <person name="Hattori M."/>
            <person name="Hamada S."/>
        </authorList>
    </citation>
    <scope>NUCLEOTIDE SEQUENCE [LARGE SCALE GENOMIC DNA]</scope>
    <source>
        <strain>SSI-1</strain>
    </source>
</reference>
<proteinExistence type="inferred from homology"/>
<accession>P0DB23</accession>
<accession>P58143</accession>
<accession>P68888</accession>
<accession>P82550</accession>
<protein>
    <recommendedName>
        <fullName evidence="1">Glycerol-3-phosphate dehydrogenase [NAD(P)+]</fullName>
        <ecNumber evidence="1">1.1.1.94</ecNumber>
    </recommendedName>
    <alternativeName>
        <fullName evidence="1">NAD(P)(+)-dependent glycerol-3-phosphate dehydrogenase</fullName>
    </alternativeName>
    <alternativeName>
        <fullName evidence="1">NAD(P)H-dependent dihydroxyacetone-phosphate reductase</fullName>
    </alternativeName>
</protein>
<feature type="chain" id="PRO_0000411349" description="Glycerol-3-phosphate dehydrogenase [NAD(P)+]">
    <location>
        <begin position="1"/>
        <end position="338"/>
    </location>
</feature>
<feature type="active site" description="Proton acceptor" evidence="1">
    <location>
        <position position="194"/>
    </location>
</feature>
<feature type="binding site" evidence="1">
    <location>
        <position position="13"/>
    </location>
    <ligand>
        <name>NADPH</name>
        <dbReference type="ChEBI" id="CHEBI:57783"/>
    </ligand>
</feature>
<feature type="binding site" evidence="1">
    <location>
        <position position="14"/>
    </location>
    <ligand>
        <name>NADPH</name>
        <dbReference type="ChEBI" id="CHEBI:57783"/>
    </ligand>
</feature>
<feature type="binding site" evidence="1">
    <location>
        <position position="108"/>
    </location>
    <ligand>
        <name>NADPH</name>
        <dbReference type="ChEBI" id="CHEBI:57783"/>
    </ligand>
</feature>
<feature type="binding site" evidence="1">
    <location>
        <position position="108"/>
    </location>
    <ligand>
        <name>sn-glycerol 3-phosphate</name>
        <dbReference type="ChEBI" id="CHEBI:57597"/>
    </ligand>
</feature>
<feature type="binding site" evidence="1">
    <location>
        <position position="139"/>
    </location>
    <ligand>
        <name>sn-glycerol 3-phosphate</name>
        <dbReference type="ChEBI" id="CHEBI:57597"/>
    </ligand>
</feature>
<feature type="binding site" evidence="1">
    <location>
        <position position="141"/>
    </location>
    <ligand>
        <name>sn-glycerol 3-phosphate</name>
        <dbReference type="ChEBI" id="CHEBI:57597"/>
    </ligand>
</feature>
<feature type="binding site" evidence="1">
    <location>
        <position position="143"/>
    </location>
    <ligand>
        <name>NADPH</name>
        <dbReference type="ChEBI" id="CHEBI:57783"/>
    </ligand>
</feature>
<feature type="binding site" evidence="1">
    <location>
        <position position="194"/>
    </location>
    <ligand>
        <name>sn-glycerol 3-phosphate</name>
        <dbReference type="ChEBI" id="CHEBI:57597"/>
    </ligand>
</feature>
<feature type="binding site" evidence="1">
    <location>
        <position position="247"/>
    </location>
    <ligand>
        <name>sn-glycerol 3-phosphate</name>
        <dbReference type="ChEBI" id="CHEBI:57597"/>
    </ligand>
</feature>
<feature type="binding site" evidence="1">
    <location>
        <position position="257"/>
    </location>
    <ligand>
        <name>sn-glycerol 3-phosphate</name>
        <dbReference type="ChEBI" id="CHEBI:57597"/>
    </ligand>
</feature>
<feature type="binding site" evidence="1">
    <location>
        <position position="258"/>
    </location>
    <ligand>
        <name>NADPH</name>
        <dbReference type="ChEBI" id="CHEBI:57783"/>
    </ligand>
</feature>
<feature type="binding site" evidence="1">
    <location>
        <position position="258"/>
    </location>
    <ligand>
        <name>sn-glycerol 3-phosphate</name>
        <dbReference type="ChEBI" id="CHEBI:57597"/>
    </ligand>
</feature>
<feature type="binding site" evidence="1">
    <location>
        <position position="259"/>
    </location>
    <ligand>
        <name>sn-glycerol 3-phosphate</name>
        <dbReference type="ChEBI" id="CHEBI:57597"/>
    </ligand>
</feature>
<feature type="binding site" evidence="1">
    <location>
        <position position="282"/>
    </location>
    <ligand>
        <name>NADPH</name>
        <dbReference type="ChEBI" id="CHEBI:57783"/>
    </ligand>
</feature>
<feature type="binding site" evidence="1">
    <location>
        <position position="284"/>
    </location>
    <ligand>
        <name>NADPH</name>
        <dbReference type="ChEBI" id="CHEBI:57783"/>
    </ligand>
</feature>
<gene>
    <name evidence="1" type="primary">gpsA</name>
    <name type="ordered locus">SPs0167</name>
</gene>
<organism>
    <name type="scientific">Streptococcus pyogenes serotype M3 (strain SSI-1)</name>
    <dbReference type="NCBI Taxonomy" id="193567"/>
    <lineage>
        <taxon>Bacteria</taxon>
        <taxon>Bacillati</taxon>
        <taxon>Bacillota</taxon>
        <taxon>Bacilli</taxon>
        <taxon>Lactobacillales</taxon>
        <taxon>Streptococcaceae</taxon>
        <taxon>Streptococcus</taxon>
    </lineage>
</organism>
<evidence type="ECO:0000255" key="1">
    <source>
        <dbReference type="HAMAP-Rule" id="MF_00394"/>
    </source>
</evidence>
<name>GPDA_STRPQ</name>
<sequence length="338" mass="36681">MTKQKVAILGPGSWGTALSQVLNDNGHDVRLWGNIPDQIEEINTKHTNRHYFKDIVLDKNITATLDLGQALSDVDAVLFVVPTKVTRLVARQVAAILDHKVVVMHASKGLEPETHERLSTILEEEIPAHFRSEVVVVSGPSHAEETIVRDITLITAASKDIEAAKYVQSLFSNHYFRLYTNTDVIGVETAGALKNIIAVGAGALHGLGYGDNAKAAVITRGLAEITRLGVKLGADPLTYSGLSGVGDLIVTGTSVHSRNWRAGAALGRGEKLEDIERNMGMVIEGIATTKVAYEIAQDLGVYMPITTAIYKSIYEGADIKESILGMMSNEFRSENEWH</sequence>
<keyword id="KW-0963">Cytoplasm</keyword>
<keyword id="KW-0444">Lipid biosynthesis</keyword>
<keyword id="KW-0443">Lipid metabolism</keyword>
<keyword id="KW-0520">NAD</keyword>
<keyword id="KW-0521">NADP</keyword>
<keyword id="KW-0547">Nucleotide-binding</keyword>
<keyword id="KW-0560">Oxidoreductase</keyword>
<keyword id="KW-0594">Phospholipid biosynthesis</keyword>
<keyword id="KW-1208">Phospholipid metabolism</keyword>
<comment type="function">
    <text evidence="1">Catalyzes the reduction of the glycolytic intermediate dihydroxyacetone phosphate (DHAP) to sn-glycerol 3-phosphate (G3P), the key precursor for phospholipid synthesis.</text>
</comment>
<comment type="catalytic activity">
    <reaction evidence="1">
        <text>sn-glycerol 3-phosphate + NAD(+) = dihydroxyacetone phosphate + NADH + H(+)</text>
        <dbReference type="Rhea" id="RHEA:11092"/>
        <dbReference type="ChEBI" id="CHEBI:15378"/>
        <dbReference type="ChEBI" id="CHEBI:57540"/>
        <dbReference type="ChEBI" id="CHEBI:57597"/>
        <dbReference type="ChEBI" id="CHEBI:57642"/>
        <dbReference type="ChEBI" id="CHEBI:57945"/>
        <dbReference type="EC" id="1.1.1.94"/>
    </reaction>
    <physiologicalReaction direction="right-to-left" evidence="1">
        <dbReference type="Rhea" id="RHEA:11094"/>
    </physiologicalReaction>
</comment>
<comment type="catalytic activity">
    <reaction evidence="1">
        <text>sn-glycerol 3-phosphate + NADP(+) = dihydroxyacetone phosphate + NADPH + H(+)</text>
        <dbReference type="Rhea" id="RHEA:11096"/>
        <dbReference type="ChEBI" id="CHEBI:15378"/>
        <dbReference type="ChEBI" id="CHEBI:57597"/>
        <dbReference type="ChEBI" id="CHEBI:57642"/>
        <dbReference type="ChEBI" id="CHEBI:57783"/>
        <dbReference type="ChEBI" id="CHEBI:58349"/>
        <dbReference type="EC" id="1.1.1.94"/>
    </reaction>
    <physiologicalReaction direction="right-to-left" evidence="1">
        <dbReference type="Rhea" id="RHEA:11098"/>
    </physiologicalReaction>
</comment>
<comment type="pathway">
    <text evidence="1">Membrane lipid metabolism; glycerophospholipid metabolism.</text>
</comment>
<comment type="subcellular location">
    <subcellularLocation>
        <location evidence="1">Cytoplasm</location>
    </subcellularLocation>
</comment>
<comment type="similarity">
    <text evidence="1">Belongs to the NAD-dependent glycerol-3-phosphate dehydrogenase family.</text>
</comment>
<dbReference type="EC" id="1.1.1.94" evidence="1"/>
<dbReference type="EMBL" id="BA000034">
    <property type="protein sequence ID" value="BAC63262.1"/>
    <property type="molecule type" value="Genomic_DNA"/>
</dbReference>
<dbReference type="RefSeq" id="WP_002986123.1">
    <property type="nucleotide sequence ID" value="NC_004606.1"/>
</dbReference>
<dbReference type="SMR" id="P0DB23"/>
<dbReference type="KEGG" id="sps:SPs0167"/>
<dbReference type="HOGENOM" id="CLU_033449_0_2_9"/>
<dbReference type="UniPathway" id="UPA00940"/>
<dbReference type="GO" id="GO:0005829">
    <property type="term" value="C:cytosol"/>
    <property type="evidence" value="ECO:0007669"/>
    <property type="project" value="TreeGrafter"/>
</dbReference>
<dbReference type="GO" id="GO:0047952">
    <property type="term" value="F:glycerol-3-phosphate dehydrogenase [NAD(P)+] activity"/>
    <property type="evidence" value="ECO:0007669"/>
    <property type="project" value="UniProtKB-UniRule"/>
</dbReference>
<dbReference type="GO" id="GO:0051287">
    <property type="term" value="F:NAD binding"/>
    <property type="evidence" value="ECO:0007669"/>
    <property type="project" value="InterPro"/>
</dbReference>
<dbReference type="GO" id="GO:0005975">
    <property type="term" value="P:carbohydrate metabolic process"/>
    <property type="evidence" value="ECO:0007669"/>
    <property type="project" value="InterPro"/>
</dbReference>
<dbReference type="GO" id="GO:0046167">
    <property type="term" value="P:glycerol-3-phosphate biosynthetic process"/>
    <property type="evidence" value="ECO:0007669"/>
    <property type="project" value="UniProtKB-UniRule"/>
</dbReference>
<dbReference type="GO" id="GO:0046168">
    <property type="term" value="P:glycerol-3-phosphate catabolic process"/>
    <property type="evidence" value="ECO:0007669"/>
    <property type="project" value="InterPro"/>
</dbReference>
<dbReference type="GO" id="GO:0006650">
    <property type="term" value="P:glycerophospholipid metabolic process"/>
    <property type="evidence" value="ECO:0007669"/>
    <property type="project" value="UniProtKB-UniRule"/>
</dbReference>
<dbReference type="GO" id="GO:0008654">
    <property type="term" value="P:phospholipid biosynthetic process"/>
    <property type="evidence" value="ECO:0007669"/>
    <property type="project" value="UniProtKB-KW"/>
</dbReference>
<dbReference type="FunFam" id="1.10.1040.10:FF:000001">
    <property type="entry name" value="Glycerol-3-phosphate dehydrogenase [NAD(P)+]"/>
    <property type="match status" value="1"/>
</dbReference>
<dbReference type="FunFam" id="3.40.50.720:FF:000019">
    <property type="entry name" value="Glycerol-3-phosphate dehydrogenase [NAD(P)+]"/>
    <property type="match status" value="1"/>
</dbReference>
<dbReference type="Gene3D" id="1.10.1040.10">
    <property type="entry name" value="N-(1-d-carboxylethyl)-l-norvaline Dehydrogenase, domain 2"/>
    <property type="match status" value="1"/>
</dbReference>
<dbReference type="Gene3D" id="3.40.50.720">
    <property type="entry name" value="NAD(P)-binding Rossmann-like Domain"/>
    <property type="match status" value="1"/>
</dbReference>
<dbReference type="HAMAP" id="MF_00394">
    <property type="entry name" value="NAD_Glyc3P_dehydrog"/>
    <property type="match status" value="1"/>
</dbReference>
<dbReference type="InterPro" id="IPR008927">
    <property type="entry name" value="6-PGluconate_DH-like_C_sf"/>
</dbReference>
<dbReference type="InterPro" id="IPR013328">
    <property type="entry name" value="6PGD_dom2"/>
</dbReference>
<dbReference type="InterPro" id="IPR006168">
    <property type="entry name" value="G3P_DH_NAD-dep"/>
</dbReference>
<dbReference type="InterPro" id="IPR006109">
    <property type="entry name" value="G3P_DH_NAD-dep_C"/>
</dbReference>
<dbReference type="InterPro" id="IPR011128">
    <property type="entry name" value="G3P_DH_NAD-dep_N"/>
</dbReference>
<dbReference type="InterPro" id="IPR036291">
    <property type="entry name" value="NAD(P)-bd_dom_sf"/>
</dbReference>
<dbReference type="NCBIfam" id="NF000940">
    <property type="entry name" value="PRK00094.1-2"/>
    <property type="match status" value="1"/>
</dbReference>
<dbReference type="NCBIfam" id="NF000941">
    <property type="entry name" value="PRK00094.1-3"/>
    <property type="match status" value="1"/>
</dbReference>
<dbReference type="NCBIfam" id="NF000942">
    <property type="entry name" value="PRK00094.1-4"/>
    <property type="match status" value="1"/>
</dbReference>
<dbReference type="PANTHER" id="PTHR11728">
    <property type="entry name" value="GLYCEROL-3-PHOSPHATE DEHYDROGENASE"/>
    <property type="match status" value="1"/>
</dbReference>
<dbReference type="PANTHER" id="PTHR11728:SF1">
    <property type="entry name" value="GLYCEROL-3-PHOSPHATE DEHYDROGENASE [NAD(+)] 2, CHLOROPLASTIC"/>
    <property type="match status" value="1"/>
</dbReference>
<dbReference type="Pfam" id="PF07479">
    <property type="entry name" value="NAD_Gly3P_dh_C"/>
    <property type="match status" value="1"/>
</dbReference>
<dbReference type="Pfam" id="PF01210">
    <property type="entry name" value="NAD_Gly3P_dh_N"/>
    <property type="match status" value="1"/>
</dbReference>
<dbReference type="PIRSF" id="PIRSF000114">
    <property type="entry name" value="Glycerol-3-P_dh"/>
    <property type="match status" value="1"/>
</dbReference>
<dbReference type="PRINTS" id="PR00077">
    <property type="entry name" value="GPDHDRGNASE"/>
</dbReference>
<dbReference type="SUPFAM" id="SSF48179">
    <property type="entry name" value="6-phosphogluconate dehydrogenase C-terminal domain-like"/>
    <property type="match status" value="1"/>
</dbReference>
<dbReference type="SUPFAM" id="SSF51735">
    <property type="entry name" value="NAD(P)-binding Rossmann-fold domains"/>
    <property type="match status" value="1"/>
</dbReference>
<dbReference type="PROSITE" id="PS00957">
    <property type="entry name" value="NAD_G3PDH"/>
    <property type="match status" value="1"/>
</dbReference>